<gene>
    <name type="primary">TBPL1</name>
    <name type="synonym">TLF</name>
    <name type="synonym">TLP</name>
    <name type="synonym">TLP21</name>
    <name type="synonym">TRF2</name>
    <name type="synonym">TRP</name>
</gene>
<comment type="function">
    <text evidence="2 3 4 6">Part of a specialized transcription system that mediates the transcription of most ribosomal proteins through the 5'-TCT-3' motif which is a core promoter element at these genes. Seems to also mediate the transcription of NF1. Does not bind the TATA box.</text>
</comment>
<comment type="subunit">
    <text>Binds TFIIA and TFIIB.</text>
</comment>
<comment type="interaction">
    <interactant intactId="EBI-716225">
        <id>P62380</id>
    </interactant>
    <interactant intactId="EBI-739789">
        <id>Q92997</id>
        <label>DVL3</label>
    </interactant>
    <organismsDiffer>false</organismsDiffer>
    <experiments>3</experiments>
</comment>
<comment type="interaction">
    <interactant intactId="EBI-716225">
        <id>P62380</id>
    </interactant>
    <interactant intactId="EBI-747754">
        <id>P28799</id>
        <label>GRN</label>
    </interactant>
    <organismsDiffer>false</organismsDiffer>
    <experiments>3</experiments>
</comment>
<comment type="interaction">
    <interactant intactId="EBI-716225">
        <id>P62380</id>
    </interactant>
    <interactant intactId="EBI-389518">
        <id>P52655</id>
        <label>GTF2A1</label>
    </interactant>
    <organismsDiffer>false</organismsDiffer>
    <experiments>7</experiments>
</comment>
<comment type="interaction">
    <interactant intactId="EBI-716225">
        <id>P62380</id>
    </interactant>
    <interactant intactId="EBI-373007">
        <id>Q9Y4Y9</id>
        <label>LSM5</label>
    </interactant>
    <organismsDiffer>false</organismsDiffer>
    <experiments>3</experiments>
</comment>
<comment type="interaction">
    <interactant intactId="EBI-716225">
        <id>P62380</id>
    </interactant>
    <interactant intactId="EBI-396669">
        <id>Q9Y3C5</id>
        <label>RNF11</label>
    </interactant>
    <organismsDiffer>false</organismsDiffer>
    <experiments>3</experiments>
</comment>
<comment type="interaction">
    <interactant intactId="EBI-716225">
        <id>P62380</id>
    </interactant>
    <interactant intactId="EBI-726527">
        <id>P13805</id>
        <label>TNNT1</label>
    </interactant>
    <organismsDiffer>false</organismsDiffer>
    <experiments>3</experiments>
</comment>
<comment type="interaction">
    <interactant intactId="EBI-716225">
        <id>P62380</id>
    </interactant>
    <interactant intactId="EBI-720609">
        <id>O76024</id>
        <label>WFS1</label>
    </interactant>
    <organismsDiffer>false</organismsDiffer>
    <experiments>3</experiments>
</comment>
<comment type="subcellular location">
    <subcellularLocation>
        <location evidence="1">Cytoplasm</location>
    </subcellularLocation>
    <subcellularLocation>
        <location evidence="1">Nucleus</location>
    </subcellularLocation>
</comment>
<comment type="tissue specificity">
    <text evidence="2 5">Ubiquitously expressed, with highest levels in the testis and ovary.</text>
</comment>
<comment type="similarity">
    <text evidence="7">Belongs to the TBP family.</text>
</comment>
<protein>
    <recommendedName>
        <fullName>TATA box-binding protein-like 1</fullName>
        <shortName>TBP-like 1</shortName>
    </recommendedName>
    <alternativeName>
        <fullName>21 kDa TBP-like protein</fullName>
    </alternativeName>
    <alternativeName>
        <fullName>Second TBP of unique DNA protein</fullName>
        <shortName>STUD</shortName>
    </alternativeName>
    <alternativeName>
        <fullName>TATA box-binding protein-related factor 2</fullName>
        <shortName>TBP-related factor 2</shortName>
    </alternativeName>
    <alternativeName>
        <fullName>TBP-like factor</fullName>
    </alternativeName>
    <alternativeName>
        <fullName>TBP-related protein</fullName>
    </alternativeName>
</protein>
<name>TBPL1_HUMAN</name>
<dbReference type="EMBL" id="AB020881">
    <property type="protein sequence ID" value="BAA75218.1"/>
    <property type="molecule type" value="mRNA"/>
</dbReference>
<dbReference type="EMBL" id="AF136570">
    <property type="protein sequence ID" value="AAD28785.1"/>
    <property type="molecule type" value="mRNA"/>
</dbReference>
<dbReference type="EMBL" id="AF130312">
    <property type="protein sequence ID" value="AAD24800.1"/>
    <property type="molecule type" value="mRNA"/>
</dbReference>
<dbReference type="EMBL" id="AK292320">
    <property type="protein sequence ID" value="BAF85009.1"/>
    <property type="molecule type" value="mRNA"/>
</dbReference>
<dbReference type="EMBL" id="AK313645">
    <property type="protein sequence ID" value="BAG36402.1"/>
    <property type="molecule type" value="mRNA"/>
</dbReference>
<dbReference type="EMBL" id="AL035699">
    <property type="status" value="NOT_ANNOTATED_CDS"/>
    <property type="molecule type" value="Genomic_DNA"/>
</dbReference>
<dbReference type="EMBL" id="CH471051">
    <property type="protein sequence ID" value="EAW47995.1"/>
    <property type="molecule type" value="Genomic_DNA"/>
</dbReference>
<dbReference type="EMBL" id="CH471051">
    <property type="protein sequence ID" value="EAW47996.1"/>
    <property type="molecule type" value="Genomic_DNA"/>
</dbReference>
<dbReference type="EMBL" id="BC000381">
    <property type="protein sequence ID" value="AAH00381.1"/>
    <property type="molecule type" value="mRNA"/>
</dbReference>
<dbReference type="EMBL" id="BC017559">
    <property type="protein sequence ID" value="AAH17559.1"/>
    <property type="molecule type" value="mRNA"/>
</dbReference>
<dbReference type="CCDS" id="CCDS5168.1"/>
<dbReference type="PIR" id="JG0162">
    <property type="entry name" value="JG0162"/>
</dbReference>
<dbReference type="RefSeq" id="NP_001240605.1">
    <property type="nucleotide sequence ID" value="NM_001253676.2"/>
</dbReference>
<dbReference type="RefSeq" id="NP_004856.1">
    <property type="nucleotide sequence ID" value="NM_004865.4"/>
</dbReference>
<dbReference type="RefSeq" id="XP_016867002.1">
    <property type="nucleotide sequence ID" value="XM_017011513.1"/>
</dbReference>
<dbReference type="SMR" id="P62380"/>
<dbReference type="BioGRID" id="114896">
    <property type="interactions" value="39"/>
</dbReference>
<dbReference type="CORUM" id="P62380"/>
<dbReference type="FunCoup" id="P62380">
    <property type="interactions" value="1172"/>
</dbReference>
<dbReference type="IntAct" id="P62380">
    <property type="interactions" value="20"/>
</dbReference>
<dbReference type="MINT" id="P62380"/>
<dbReference type="STRING" id="9606.ENSP00000237264"/>
<dbReference type="iPTMnet" id="P62380"/>
<dbReference type="PhosphoSitePlus" id="P62380"/>
<dbReference type="BioMuta" id="TBPL1"/>
<dbReference type="DMDM" id="61248509"/>
<dbReference type="jPOST" id="P62380"/>
<dbReference type="MassIVE" id="P62380"/>
<dbReference type="PaxDb" id="9606-ENSP00000237264"/>
<dbReference type="PeptideAtlas" id="P62380"/>
<dbReference type="ProteomicsDB" id="57399"/>
<dbReference type="Pumba" id="P62380"/>
<dbReference type="Antibodypedia" id="19728">
    <property type="antibodies" value="176 antibodies from 30 providers"/>
</dbReference>
<dbReference type="DNASU" id="9519"/>
<dbReference type="Ensembl" id="ENST00000237264.9">
    <property type="protein sequence ID" value="ENSP00000237264.3"/>
    <property type="gene ID" value="ENSG00000028839.10"/>
</dbReference>
<dbReference type="Ensembl" id="ENST00000613034.4">
    <property type="protein sequence ID" value="ENSP00000478795.1"/>
    <property type="gene ID" value="ENSG00000028839.10"/>
</dbReference>
<dbReference type="GeneID" id="9519"/>
<dbReference type="KEGG" id="hsa:9519"/>
<dbReference type="MANE-Select" id="ENST00000237264.9">
    <property type="protein sequence ID" value="ENSP00000237264.3"/>
    <property type="RefSeq nucleotide sequence ID" value="NM_004865.4"/>
    <property type="RefSeq protein sequence ID" value="NP_004856.1"/>
</dbReference>
<dbReference type="UCSC" id="uc003qel.4">
    <property type="organism name" value="human"/>
</dbReference>
<dbReference type="AGR" id="HGNC:11589"/>
<dbReference type="CTD" id="9519"/>
<dbReference type="DisGeNET" id="9519"/>
<dbReference type="GeneCards" id="TBPL1"/>
<dbReference type="HGNC" id="HGNC:11589">
    <property type="gene designation" value="TBPL1"/>
</dbReference>
<dbReference type="HPA" id="ENSG00000028839">
    <property type="expression patterns" value="Tissue enhanced (testis)"/>
</dbReference>
<dbReference type="MIM" id="605521">
    <property type="type" value="gene"/>
</dbReference>
<dbReference type="neXtProt" id="NX_P62380"/>
<dbReference type="OpenTargets" id="ENSG00000028839"/>
<dbReference type="PharmGKB" id="PA36353"/>
<dbReference type="VEuPathDB" id="HostDB:ENSG00000028839"/>
<dbReference type="eggNOG" id="KOG3302">
    <property type="taxonomic scope" value="Eukaryota"/>
</dbReference>
<dbReference type="GeneTree" id="ENSGT00940000155712"/>
<dbReference type="InParanoid" id="P62380"/>
<dbReference type="OMA" id="NCEYEPE"/>
<dbReference type="OrthoDB" id="2127950at2759"/>
<dbReference type="PAN-GO" id="P62380">
    <property type="GO annotations" value="2 GO annotations based on evolutionary models"/>
</dbReference>
<dbReference type="PhylomeDB" id="P62380"/>
<dbReference type="TreeFam" id="TF300102"/>
<dbReference type="PathwayCommons" id="P62380"/>
<dbReference type="SignaLink" id="P62380"/>
<dbReference type="BioGRID-ORCS" id="9519">
    <property type="hits" value="21 hits in 1126 CRISPR screens"/>
</dbReference>
<dbReference type="ChiTaRS" id="TBPL1">
    <property type="organism name" value="human"/>
</dbReference>
<dbReference type="GeneWiki" id="TBPL1"/>
<dbReference type="GenomeRNAi" id="9519"/>
<dbReference type="Pharos" id="P62380">
    <property type="development level" value="Tbio"/>
</dbReference>
<dbReference type="PRO" id="PR:P62380"/>
<dbReference type="Proteomes" id="UP000005640">
    <property type="component" value="Chromosome 6"/>
</dbReference>
<dbReference type="RNAct" id="P62380">
    <property type="molecule type" value="protein"/>
</dbReference>
<dbReference type="Bgee" id="ENSG00000028839">
    <property type="expression patterns" value="Expressed in oocyte and 202 other cell types or tissues"/>
</dbReference>
<dbReference type="ExpressionAtlas" id="P62380">
    <property type="expression patterns" value="baseline and differential"/>
</dbReference>
<dbReference type="GO" id="GO:0005737">
    <property type="term" value="C:cytoplasm"/>
    <property type="evidence" value="ECO:0007669"/>
    <property type="project" value="UniProtKB-SubCell"/>
</dbReference>
<dbReference type="GO" id="GO:0001673">
    <property type="term" value="C:male germ cell nucleus"/>
    <property type="evidence" value="ECO:0007669"/>
    <property type="project" value="Ensembl"/>
</dbReference>
<dbReference type="GO" id="GO:0005672">
    <property type="term" value="C:transcription factor TFIIA complex"/>
    <property type="evidence" value="ECO:0007669"/>
    <property type="project" value="Ensembl"/>
</dbReference>
<dbReference type="GO" id="GO:0140223">
    <property type="term" value="F:general transcription initiation factor activity"/>
    <property type="evidence" value="ECO:0000318"/>
    <property type="project" value="GO_Central"/>
</dbReference>
<dbReference type="GO" id="GO:0000979">
    <property type="term" value="F:RNA polymerase II core promoter sequence-specific DNA binding"/>
    <property type="evidence" value="ECO:0000314"/>
    <property type="project" value="NTNU_SB"/>
</dbReference>
<dbReference type="GO" id="GO:0016251">
    <property type="term" value="F:RNA polymerase II general transcription initiation factor activity"/>
    <property type="evidence" value="ECO:0000314"/>
    <property type="project" value="GO_Central"/>
</dbReference>
<dbReference type="GO" id="GO:0001675">
    <property type="term" value="P:acrosome assembly"/>
    <property type="evidence" value="ECO:0007669"/>
    <property type="project" value="Ensembl"/>
</dbReference>
<dbReference type="GO" id="GO:0006352">
    <property type="term" value="P:DNA-templated transcription initiation"/>
    <property type="evidence" value="ECO:0000318"/>
    <property type="project" value="GO_Central"/>
</dbReference>
<dbReference type="GO" id="GO:0006235">
    <property type="term" value="P:dTTP biosynthetic process"/>
    <property type="evidence" value="ECO:0007669"/>
    <property type="project" value="Ensembl"/>
</dbReference>
<dbReference type="GO" id="GO:0007289">
    <property type="term" value="P:spermatid nucleus differentiation"/>
    <property type="evidence" value="ECO:0007669"/>
    <property type="project" value="Ensembl"/>
</dbReference>
<dbReference type="GO" id="GO:0006366">
    <property type="term" value="P:transcription by RNA polymerase II"/>
    <property type="evidence" value="ECO:0000304"/>
    <property type="project" value="UniProtKB"/>
</dbReference>
<dbReference type="CDD" id="cd04517">
    <property type="entry name" value="TLF"/>
    <property type="match status" value="1"/>
</dbReference>
<dbReference type="FunFam" id="3.30.310.10:FF:000005">
    <property type="entry name" value="TATA box-binding protein-like 1"/>
    <property type="match status" value="1"/>
</dbReference>
<dbReference type="FunFam" id="3.30.310.10:FF:000009">
    <property type="entry name" value="TatA box-binding protein-like protein 1"/>
    <property type="match status" value="1"/>
</dbReference>
<dbReference type="Gene3D" id="3.30.310.10">
    <property type="entry name" value="TATA-Binding Protein"/>
    <property type="match status" value="2"/>
</dbReference>
<dbReference type="InterPro" id="IPR000814">
    <property type="entry name" value="TBP"/>
</dbReference>
<dbReference type="InterPro" id="IPR015445">
    <property type="entry name" value="TBP-like"/>
</dbReference>
<dbReference type="InterPro" id="IPR012295">
    <property type="entry name" value="TBP_dom_sf"/>
</dbReference>
<dbReference type="PANTHER" id="PTHR10126">
    <property type="entry name" value="TATA-BOX BINDING PROTEIN"/>
    <property type="match status" value="1"/>
</dbReference>
<dbReference type="Pfam" id="PF00352">
    <property type="entry name" value="TBP"/>
    <property type="match status" value="2"/>
</dbReference>
<dbReference type="PRINTS" id="PR00686">
    <property type="entry name" value="TIFACTORIID"/>
</dbReference>
<dbReference type="SUPFAM" id="SSF55945">
    <property type="entry name" value="TATA-box binding protein-like"/>
    <property type="match status" value="2"/>
</dbReference>
<proteinExistence type="evidence at protein level"/>
<organism>
    <name type="scientific">Homo sapiens</name>
    <name type="common">Human</name>
    <dbReference type="NCBI Taxonomy" id="9606"/>
    <lineage>
        <taxon>Eukaryota</taxon>
        <taxon>Metazoa</taxon>
        <taxon>Chordata</taxon>
        <taxon>Craniata</taxon>
        <taxon>Vertebrata</taxon>
        <taxon>Euteleostomi</taxon>
        <taxon>Mammalia</taxon>
        <taxon>Eutheria</taxon>
        <taxon>Euarchontoglires</taxon>
        <taxon>Primates</taxon>
        <taxon>Haplorrhini</taxon>
        <taxon>Catarrhini</taxon>
        <taxon>Hominidae</taxon>
        <taxon>Homo</taxon>
    </lineage>
</organism>
<evidence type="ECO:0000250" key="1"/>
<evidence type="ECO:0000269" key="2">
    <source>
    </source>
</evidence>
<evidence type="ECO:0000269" key="3">
    <source>
    </source>
</evidence>
<evidence type="ECO:0000269" key="4">
    <source>
    </source>
</evidence>
<evidence type="ECO:0000269" key="5">
    <source>
    </source>
</evidence>
<evidence type="ECO:0000269" key="6">
    <source>
    </source>
</evidence>
<evidence type="ECO:0000305" key="7"/>
<feature type="chain" id="PRO_0000153992" description="TATA box-binding protein-like 1">
    <location>
        <begin position="1"/>
        <end position="186"/>
    </location>
</feature>
<feature type="sequence conflict" description="In Ref. 7; AAH00381." evidence="7" ref="7">
    <original>V</original>
    <variation>A</variation>
    <location>
        <position position="44"/>
    </location>
</feature>
<accession>P62380</accession>
<accession>A8K8F5</accession>
<accession>O95753</accession>
<accession>Q9BWD5</accession>
<accession>Q9Z2Z0</accession>
<sequence length="186" mass="20887">MDADSDVALDILITNVVCVFRTRCHLNLRKIALEGANVIYKRDVGKVLMKLRKPRITATIWSSGKIICTGATSEEEAKFGARRLARSLQKLGFQVIFTDFKVVNVLAVCNMPFEIRLPEFTKNNRPHASYEPELHPAVCYRIKSLRATLQIFSTGSITVTGPNVKAVATAVEQIYPFVFESRKEIL</sequence>
<reference key="1">
    <citation type="journal article" date="1999" name="Biochem. Biophys. Res. Commun.">
        <title>Isolation of cDNA, chromosome mapping, and expression of the human TBP-like protein.</title>
        <authorList>
            <person name="Ohbayashi T."/>
            <person name="Kishimoto T."/>
            <person name="Makino Y."/>
            <person name="Shimada M."/>
            <person name="Nakadi T."/>
            <person name="Aoki T."/>
            <person name="Kawata T."/>
            <person name="Niwa S."/>
            <person name="Tamura T.-A."/>
        </authorList>
    </citation>
    <scope>NUCLEOTIDE SEQUENCE [MRNA]</scope>
    <scope>FUNCTION</scope>
    <scope>TISSUE SPECIFICITY</scope>
    <source>
        <tissue>Retina</tissue>
    </source>
</reference>
<reference key="2">
    <citation type="journal article" date="1999" name="Proc. Natl. Acad. Sci. U.S.A.">
        <title>TATA box-binding protein (TBP)-related factor 2 (TRF2), a third member of the TBP family.</title>
        <authorList>
            <person name="Rabenstein M.D."/>
            <person name="Zhou S."/>
            <person name="Lis J.T."/>
            <person name="Tjian R."/>
        </authorList>
    </citation>
    <scope>NUCLEOTIDE SEQUENCE [MRNA]</scope>
    <scope>FUNCTION</scope>
    <scope>INTERACTION WITH TFIIA AND TFIIB</scope>
</reference>
<reference key="3">
    <citation type="journal article" date="2005" name="Mol. Cell. Biol.">
        <title>TATA-binding protein (TBP)-like factor (TLF) is a functional regulator of transcription: reciprocal regulation of the neurofibromatosis type 1 and c-fos genes by TLF/TRF2 and TBP.</title>
        <authorList>
            <person name="Chong J.A."/>
            <person name="Moran M.M."/>
            <person name="Teichmann M."/>
            <person name="Kaczmarek J.S."/>
            <person name="Roeder R."/>
            <person name="Clapham D.E."/>
        </authorList>
    </citation>
    <scope>NUCLEOTIDE SEQUENCE [MRNA]</scope>
    <scope>FUNCTION</scope>
</reference>
<reference key="4">
    <citation type="journal article" date="2004" name="Nat. Genet.">
        <title>Complete sequencing and characterization of 21,243 full-length human cDNAs.</title>
        <authorList>
            <person name="Ota T."/>
            <person name="Suzuki Y."/>
            <person name="Nishikawa T."/>
            <person name="Otsuki T."/>
            <person name="Sugiyama T."/>
            <person name="Irie R."/>
            <person name="Wakamatsu A."/>
            <person name="Hayashi K."/>
            <person name="Sato H."/>
            <person name="Nagai K."/>
            <person name="Kimura K."/>
            <person name="Makita H."/>
            <person name="Sekine M."/>
            <person name="Obayashi M."/>
            <person name="Nishi T."/>
            <person name="Shibahara T."/>
            <person name="Tanaka T."/>
            <person name="Ishii S."/>
            <person name="Yamamoto J."/>
            <person name="Saito K."/>
            <person name="Kawai Y."/>
            <person name="Isono Y."/>
            <person name="Nakamura Y."/>
            <person name="Nagahari K."/>
            <person name="Murakami K."/>
            <person name="Yasuda T."/>
            <person name="Iwayanagi T."/>
            <person name="Wagatsuma M."/>
            <person name="Shiratori A."/>
            <person name="Sudo H."/>
            <person name="Hosoiri T."/>
            <person name="Kaku Y."/>
            <person name="Kodaira H."/>
            <person name="Kondo H."/>
            <person name="Sugawara M."/>
            <person name="Takahashi M."/>
            <person name="Kanda K."/>
            <person name="Yokoi T."/>
            <person name="Furuya T."/>
            <person name="Kikkawa E."/>
            <person name="Omura Y."/>
            <person name="Abe K."/>
            <person name="Kamihara K."/>
            <person name="Katsuta N."/>
            <person name="Sato K."/>
            <person name="Tanikawa M."/>
            <person name="Yamazaki M."/>
            <person name="Ninomiya K."/>
            <person name="Ishibashi T."/>
            <person name="Yamashita H."/>
            <person name="Murakawa K."/>
            <person name="Fujimori K."/>
            <person name="Tanai H."/>
            <person name="Kimata M."/>
            <person name="Watanabe M."/>
            <person name="Hiraoka S."/>
            <person name="Chiba Y."/>
            <person name="Ishida S."/>
            <person name="Ono Y."/>
            <person name="Takiguchi S."/>
            <person name="Watanabe S."/>
            <person name="Yosida M."/>
            <person name="Hotuta T."/>
            <person name="Kusano J."/>
            <person name="Kanehori K."/>
            <person name="Takahashi-Fujii A."/>
            <person name="Hara H."/>
            <person name="Tanase T.-O."/>
            <person name="Nomura Y."/>
            <person name="Togiya S."/>
            <person name="Komai F."/>
            <person name="Hara R."/>
            <person name="Takeuchi K."/>
            <person name="Arita M."/>
            <person name="Imose N."/>
            <person name="Musashino K."/>
            <person name="Yuuki H."/>
            <person name="Oshima A."/>
            <person name="Sasaki N."/>
            <person name="Aotsuka S."/>
            <person name="Yoshikawa Y."/>
            <person name="Matsunawa H."/>
            <person name="Ichihara T."/>
            <person name="Shiohata N."/>
            <person name="Sano S."/>
            <person name="Moriya S."/>
            <person name="Momiyama H."/>
            <person name="Satoh N."/>
            <person name="Takami S."/>
            <person name="Terashima Y."/>
            <person name="Suzuki O."/>
            <person name="Nakagawa S."/>
            <person name="Senoh A."/>
            <person name="Mizoguchi H."/>
            <person name="Goto Y."/>
            <person name="Shimizu F."/>
            <person name="Wakebe H."/>
            <person name="Hishigaki H."/>
            <person name="Watanabe T."/>
            <person name="Sugiyama A."/>
            <person name="Takemoto M."/>
            <person name="Kawakami B."/>
            <person name="Yamazaki M."/>
            <person name="Watanabe K."/>
            <person name="Kumagai A."/>
            <person name="Itakura S."/>
            <person name="Fukuzumi Y."/>
            <person name="Fujimori Y."/>
            <person name="Komiyama M."/>
            <person name="Tashiro H."/>
            <person name="Tanigami A."/>
            <person name="Fujiwara T."/>
            <person name="Ono T."/>
            <person name="Yamada K."/>
            <person name="Fujii Y."/>
            <person name="Ozaki K."/>
            <person name="Hirao M."/>
            <person name="Ohmori Y."/>
            <person name="Kawabata A."/>
            <person name="Hikiji T."/>
            <person name="Kobatake N."/>
            <person name="Inagaki H."/>
            <person name="Ikema Y."/>
            <person name="Okamoto S."/>
            <person name="Okitani R."/>
            <person name="Kawakami T."/>
            <person name="Noguchi S."/>
            <person name="Itoh T."/>
            <person name="Shigeta K."/>
            <person name="Senba T."/>
            <person name="Matsumura K."/>
            <person name="Nakajima Y."/>
            <person name="Mizuno T."/>
            <person name="Morinaga M."/>
            <person name="Sasaki M."/>
            <person name="Togashi T."/>
            <person name="Oyama M."/>
            <person name="Hata H."/>
            <person name="Watanabe M."/>
            <person name="Komatsu T."/>
            <person name="Mizushima-Sugano J."/>
            <person name="Satoh T."/>
            <person name="Shirai Y."/>
            <person name="Takahashi Y."/>
            <person name="Nakagawa K."/>
            <person name="Okumura K."/>
            <person name="Nagase T."/>
            <person name="Nomura N."/>
            <person name="Kikuchi H."/>
            <person name="Masuho Y."/>
            <person name="Yamashita R."/>
            <person name="Nakai K."/>
            <person name="Yada T."/>
            <person name="Nakamura Y."/>
            <person name="Ohara O."/>
            <person name="Isogai T."/>
            <person name="Sugano S."/>
        </authorList>
    </citation>
    <scope>NUCLEOTIDE SEQUENCE [LARGE SCALE MRNA]</scope>
    <source>
        <tissue>Testis</tissue>
        <tissue>Uterus</tissue>
    </source>
</reference>
<reference key="5">
    <citation type="journal article" date="2003" name="Nature">
        <title>The DNA sequence and analysis of human chromosome 6.</title>
        <authorList>
            <person name="Mungall A.J."/>
            <person name="Palmer S.A."/>
            <person name="Sims S.K."/>
            <person name="Edwards C.A."/>
            <person name="Ashurst J.L."/>
            <person name="Wilming L."/>
            <person name="Jones M.C."/>
            <person name="Horton R."/>
            <person name="Hunt S.E."/>
            <person name="Scott C.E."/>
            <person name="Gilbert J.G.R."/>
            <person name="Clamp M.E."/>
            <person name="Bethel G."/>
            <person name="Milne S."/>
            <person name="Ainscough R."/>
            <person name="Almeida J.P."/>
            <person name="Ambrose K.D."/>
            <person name="Andrews T.D."/>
            <person name="Ashwell R.I.S."/>
            <person name="Babbage A.K."/>
            <person name="Bagguley C.L."/>
            <person name="Bailey J."/>
            <person name="Banerjee R."/>
            <person name="Barker D.J."/>
            <person name="Barlow K.F."/>
            <person name="Bates K."/>
            <person name="Beare D.M."/>
            <person name="Beasley H."/>
            <person name="Beasley O."/>
            <person name="Bird C.P."/>
            <person name="Blakey S.E."/>
            <person name="Bray-Allen S."/>
            <person name="Brook J."/>
            <person name="Brown A.J."/>
            <person name="Brown J.Y."/>
            <person name="Burford D.C."/>
            <person name="Burrill W."/>
            <person name="Burton J."/>
            <person name="Carder C."/>
            <person name="Carter N.P."/>
            <person name="Chapman J.C."/>
            <person name="Clark S.Y."/>
            <person name="Clark G."/>
            <person name="Clee C.M."/>
            <person name="Clegg S."/>
            <person name="Cobley V."/>
            <person name="Collier R.E."/>
            <person name="Collins J.E."/>
            <person name="Colman L.K."/>
            <person name="Corby N.R."/>
            <person name="Coville G.J."/>
            <person name="Culley K.M."/>
            <person name="Dhami P."/>
            <person name="Davies J."/>
            <person name="Dunn M."/>
            <person name="Earthrowl M.E."/>
            <person name="Ellington A.E."/>
            <person name="Evans K.A."/>
            <person name="Faulkner L."/>
            <person name="Francis M.D."/>
            <person name="Frankish A."/>
            <person name="Frankland J."/>
            <person name="French L."/>
            <person name="Garner P."/>
            <person name="Garnett J."/>
            <person name="Ghori M.J."/>
            <person name="Gilby L.M."/>
            <person name="Gillson C.J."/>
            <person name="Glithero R.J."/>
            <person name="Grafham D.V."/>
            <person name="Grant M."/>
            <person name="Gribble S."/>
            <person name="Griffiths C."/>
            <person name="Griffiths M.N.D."/>
            <person name="Hall R."/>
            <person name="Halls K.S."/>
            <person name="Hammond S."/>
            <person name="Harley J.L."/>
            <person name="Hart E.A."/>
            <person name="Heath P.D."/>
            <person name="Heathcott R."/>
            <person name="Holmes S.J."/>
            <person name="Howden P.J."/>
            <person name="Howe K.L."/>
            <person name="Howell G.R."/>
            <person name="Huckle E."/>
            <person name="Humphray S.J."/>
            <person name="Humphries M.D."/>
            <person name="Hunt A.R."/>
            <person name="Johnson C.M."/>
            <person name="Joy A.A."/>
            <person name="Kay M."/>
            <person name="Keenan S.J."/>
            <person name="Kimberley A.M."/>
            <person name="King A."/>
            <person name="Laird G.K."/>
            <person name="Langford C."/>
            <person name="Lawlor S."/>
            <person name="Leongamornlert D.A."/>
            <person name="Leversha M."/>
            <person name="Lloyd C.R."/>
            <person name="Lloyd D.M."/>
            <person name="Loveland J.E."/>
            <person name="Lovell J."/>
            <person name="Martin S."/>
            <person name="Mashreghi-Mohammadi M."/>
            <person name="Maslen G.L."/>
            <person name="Matthews L."/>
            <person name="McCann O.T."/>
            <person name="McLaren S.J."/>
            <person name="McLay K."/>
            <person name="McMurray A."/>
            <person name="Moore M.J.F."/>
            <person name="Mullikin J.C."/>
            <person name="Niblett D."/>
            <person name="Nickerson T."/>
            <person name="Novik K.L."/>
            <person name="Oliver K."/>
            <person name="Overton-Larty E.K."/>
            <person name="Parker A."/>
            <person name="Patel R."/>
            <person name="Pearce A.V."/>
            <person name="Peck A.I."/>
            <person name="Phillimore B.J.C.T."/>
            <person name="Phillips S."/>
            <person name="Plumb R.W."/>
            <person name="Porter K.M."/>
            <person name="Ramsey Y."/>
            <person name="Ranby S.A."/>
            <person name="Rice C.M."/>
            <person name="Ross M.T."/>
            <person name="Searle S.M."/>
            <person name="Sehra H.K."/>
            <person name="Sheridan E."/>
            <person name="Skuce C.D."/>
            <person name="Smith S."/>
            <person name="Smith M."/>
            <person name="Spraggon L."/>
            <person name="Squares S.L."/>
            <person name="Steward C.A."/>
            <person name="Sycamore N."/>
            <person name="Tamlyn-Hall G."/>
            <person name="Tester J."/>
            <person name="Theaker A.J."/>
            <person name="Thomas D.W."/>
            <person name="Thorpe A."/>
            <person name="Tracey A."/>
            <person name="Tromans A."/>
            <person name="Tubby B."/>
            <person name="Wall M."/>
            <person name="Wallis J.M."/>
            <person name="West A.P."/>
            <person name="White S.S."/>
            <person name="Whitehead S.L."/>
            <person name="Whittaker H."/>
            <person name="Wild A."/>
            <person name="Willey D.J."/>
            <person name="Wilmer T.E."/>
            <person name="Wood J.M."/>
            <person name="Wray P.W."/>
            <person name="Wyatt J.C."/>
            <person name="Young L."/>
            <person name="Younger R.M."/>
            <person name="Bentley D.R."/>
            <person name="Coulson A."/>
            <person name="Durbin R.M."/>
            <person name="Hubbard T."/>
            <person name="Sulston J.E."/>
            <person name="Dunham I."/>
            <person name="Rogers J."/>
            <person name="Beck S."/>
        </authorList>
    </citation>
    <scope>NUCLEOTIDE SEQUENCE [LARGE SCALE GENOMIC DNA]</scope>
</reference>
<reference key="6">
    <citation type="submission" date="2005-09" db="EMBL/GenBank/DDBJ databases">
        <authorList>
            <person name="Mural R.J."/>
            <person name="Istrail S."/>
            <person name="Sutton G."/>
            <person name="Florea L."/>
            <person name="Halpern A.L."/>
            <person name="Mobarry C.M."/>
            <person name="Lippert R."/>
            <person name="Walenz B."/>
            <person name="Shatkay H."/>
            <person name="Dew I."/>
            <person name="Miller J.R."/>
            <person name="Flanigan M.J."/>
            <person name="Edwards N.J."/>
            <person name="Bolanos R."/>
            <person name="Fasulo D."/>
            <person name="Halldorsson B.V."/>
            <person name="Hannenhalli S."/>
            <person name="Turner R."/>
            <person name="Yooseph S."/>
            <person name="Lu F."/>
            <person name="Nusskern D.R."/>
            <person name="Shue B.C."/>
            <person name="Zheng X.H."/>
            <person name="Zhong F."/>
            <person name="Delcher A.L."/>
            <person name="Huson D.H."/>
            <person name="Kravitz S.A."/>
            <person name="Mouchard L."/>
            <person name="Reinert K."/>
            <person name="Remington K.A."/>
            <person name="Clark A.G."/>
            <person name="Waterman M.S."/>
            <person name="Eichler E.E."/>
            <person name="Adams M.D."/>
            <person name="Hunkapiller M.W."/>
            <person name="Myers E.W."/>
            <person name="Venter J.C."/>
        </authorList>
    </citation>
    <scope>NUCLEOTIDE SEQUENCE [LARGE SCALE GENOMIC DNA]</scope>
</reference>
<reference key="7">
    <citation type="journal article" date="2004" name="Genome Res.">
        <title>The status, quality, and expansion of the NIH full-length cDNA project: the Mammalian Gene Collection (MGC).</title>
        <authorList>
            <consortium name="The MGC Project Team"/>
        </authorList>
    </citation>
    <scope>NUCLEOTIDE SEQUENCE [LARGE SCALE MRNA]</scope>
    <source>
        <tissue>Lung</tissue>
        <tissue>Uterus</tissue>
    </source>
</reference>
<reference key="8">
    <citation type="journal article" date="2007" name="DNA Cell Biol.">
        <title>Genomics, evolution, and expression of TBPL2, a member of the TBP family.</title>
        <authorList>
            <person name="Di Pietro C."/>
            <person name="Ragusa M."/>
            <person name="Duro L."/>
            <person name="Guglielmino M.R."/>
            <person name="Barbagallo D."/>
            <person name="Carnemolla A."/>
            <person name="Lagana A."/>
            <person name="Buffa P."/>
            <person name="Angelica R."/>
            <person name="Rinaldi A."/>
            <person name="Calafato M.S."/>
            <person name="Milicia I."/>
            <person name="Caserta C."/>
            <person name="Giugno R."/>
            <person name="Pulvirenti A."/>
            <person name="Giunta V."/>
            <person name="Rapisarda A."/>
            <person name="Di Pietro V."/>
            <person name="Grillo A."/>
            <person name="Messina A."/>
            <person name="Ferro A."/>
            <person name="Grzeschik K.H."/>
            <person name="Purrello M."/>
        </authorList>
    </citation>
    <scope>TISSUE SPECIFICITY</scope>
</reference>
<reference key="9">
    <citation type="journal article" date="2011" name="BMC Syst. Biol.">
        <title>Initial characterization of the human central proteome.</title>
        <authorList>
            <person name="Burkard T.R."/>
            <person name="Planyavsky M."/>
            <person name="Kaupe I."/>
            <person name="Breitwieser F.P."/>
            <person name="Buerckstuemmer T."/>
            <person name="Bennett K.L."/>
            <person name="Superti-Furga G."/>
            <person name="Colinge J."/>
        </authorList>
    </citation>
    <scope>IDENTIFICATION BY MASS SPECTROMETRY [LARGE SCALE ANALYSIS]</scope>
</reference>
<reference key="10">
    <citation type="journal article" date="2014" name="Genes Dev.">
        <title>TRF2, but not TBP, mediates the transcription of ribosomal protein genes.</title>
        <authorList>
            <person name="Wang Y.L."/>
            <person name="Duttke S.H."/>
            <person name="Chen K."/>
            <person name="Johnston J."/>
            <person name="Kassavetis G.A."/>
            <person name="Zeitlinger J."/>
            <person name="Kadonaga J.T."/>
        </authorList>
    </citation>
    <scope>FUNCTION</scope>
</reference>
<keyword id="KW-0963">Cytoplasm</keyword>
<keyword id="KW-0238">DNA-binding</keyword>
<keyword id="KW-0539">Nucleus</keyword>
<keyword id="KW-1267">Proteomics identification</keyword>
<keyword id="KW-1185">Reference proteome</keyword>
<keyword id="KW-0804">Transcription</keyword>
<keyword id="KW-0805">Transcription regulation</keyword>